<reference key="1">
    <citation type="journal article" date="1998" name="Nature">
        <title>The complete genome of the hyperthermophilic bacterium Aquifex aeolicus.</title>
        <authorList>
            <person name="Deckert G."/>
            <person name="Warren P.V."/>
            <person name="Gaasterland T."/>
            <person name="Young W.G."/>
            <person name="Lenox A.L."/>
            <person name="Graham D.E."/>
            <person name="Overbeek R."/>
            <person name="Snead M.A."/>
            <person name="Keller M."/>
            <person name="Aujay M."/>
            <person name="Huber R."/>
            <person name="Feldman R.A."/>
            <person name="Short J.M."/>
            <person name="Olsen G.J."/>
            <person name="Swanson R.V."/>
        </authorList>
    </citation>
    <scope>NUCLEOTIDE SEQUENCE [LARGE SCALE GENOMIC DNA]</scope>
    <source>
        <strain>VF5</strain>
    </source>
</reference>
<comment type="subunit">
    <text evidence="1">The basal body constitutes a major portion of the flagellar organelle and consists of four rings (L,P,S, and M) mounted on a central rod. The rod consists of about 26 subunits of FlgG in the distal portion, and FlgB, FlgC and FlgF are thought to build up the proximal portion of the rod with about 6 subunits each (By similarity).</text>
</comment>
<comment type="subcellular location">
    <subcellularLocation>
        <location evidence="1">Bacterial flagellum basal body</location>
    </subcellularLocation>
</comment>
<comment type="similarity">
    <text evidence="2">Belongs to the flagella basal body rod proteins family.</text>
</comment>
<feature type="chain" id="PRO_0000180796" description="Flagellar basal-body rod protein FlgC">
    <location>
        <begin position="1"/>
        <end position="134"/>
    </location>
</feature>
<organism>
    <name type="scientific">Aquifex aeolicus (strain VF5)</name>
    <dbReference type="NCBI Taxonomy" id="224324"/>
    <lineage>
        <taxon>Bacteria</taxon>
        <taxon>Pseudomonadati</taxon>
        <taxon>Aquificota</taxon>
        <taxon>Aquificia</taxon>
        <taxon>Aquificales</taxon>
        <taxon>Aquificaceae</taxon>
        <taxon>Aquifex</taxon>
    </lineage>
</organism>
<name>FLGC_AQUAE</name>
<protein>
    <recommendedName>
        <fullName>Flagellar basal-body rod protein FlgC</fullName>
    </recommendedName>
</protein>
<gene>
    <name type="primary">flgC</name>
    <name type="ordered locus">aq_1183</name>
</gene>
<proteinExistence type="inferred from homology"/>
<dbReference type="EMBL" id="AE000657">
    <property type="protein sequence ID" value="AAC07195.1"/>
    <property type="molecule type" value="Genomic_DNA"/>
</dbReference>
<dbReference type="PIR" id="H70401">
    <property type="entry name" value="H70401"/>
</dbReference>
<dbReference type="RefSeq" id="NP_213807.1">
    <property type="nucleotide sequence ID" value="NC_000918.1"/>
</dbReference>
<dbReference type="RefSeq" id="WP_010880745.1">
    <property type="nucleotide sequence ID" value="NC_000918.1"/>
</dbReference>
<dbReference type="SMR" id="O67243"/>
<dbReference type="FunCoup" id="O67243">
    <property type="interactions" value="75"/>
</dbReference>
<dbReference type="STRING" id="224324.aq_1183"/>
<dbReference type="EnsemblBacteria" id="AAC07195">
    <property type="protein sequence ID" value="AAC07195"/>
    <property type="gene ID" value="aq_1183"/>
</dbReference>
<dbReference type="KEGG" id="aae:aq_1183"/>
<dbReference type="PATRIC" id="fig|224324.8.peg.920"/>
<dbReference type="eggNOG" id="COG1558">
    <property type="taxonomic scope" value="Bacteria"/>
</dbReference>
<dbReference type="HOGENOM" id="CLU_123272_0_0_0"/>
<dbReference type="InParanoid" id="O67243"/>
<dbReference type="OrthoDB" id="9794148at2"/>
<dbReference type="Proteomes" id="UP000000798">
    <property type="component" value="Chromosome"/>
</dbReference>
<dbReference type="GO" id="GO:0009288">
    <property type="term" value="C:bacterial-type flagellum"/>
    <property type="evidence" value="ECO:0000318"/>
    <property type="project" value="GO_Central"/>
</dbReference>
<dbReference type="GO" id="GO:0030694">
    <property type="term" value="C:bacterial-type flagellum basal body, rod"/>
    <property type="evidence" value="ECO:0007669"/>
    <property type="project" value="InterPro"/>
</dbReference>
<dbReference type="GO" id="GO:0071978">
    <property type="term" value="P:bacterial-type flagellum-dependent swarming motility"/>
    <property type="evidence" value="ECO:0000318"/>
    <property type="project" value="GO_Central"/>
</dbReference>
<dbReference type="InterPro" id="IPR001444">
    <property type="entry name" value="Flag_bb_rod_N"/>
</dbReference>
<dbReference type="InterPro" id="IPR019776">
    <property type="entry name" value="Flagellar_basal_body_rod_CS"/>
</dbReference>
<dbReference type="InterPro" id="IPR010930">
    <property type="entry name" value="Flg_bb/hook_C_dom"/>
</dbReference>
<dbReference type="InterPro" id="IPR006299">
    <property type="entry name" value="FlgC"/>
</dbReference>
<dbReference type="NCBIfam" id="TIGR01395">
    <property type="entry name" value="FlgC"/>
    <property type="match status" value="1"/>
</dbReference>
<dbReference type="PANTHER" id="PTHR30435:SF2">
    <property type="entry name" value="FLAGELLAR BASAL-BODY ROD PROTEIN FLGC"/>
    <property type="match status" value="1"/>
</dbReference>
<dbReference type="PANTHER" id="PTHR30435">
    <property type="entry name" value="FLAGELLAR PROTEIN"/>
    <property type="match status" value="1"/>
</dbReference>
<dbReference type="Pfam" id="PF00460">
    <property type="entry name" value="Flg_bb_rod"/>
    <property type="match status" value="1"/>
</dbReference>
<dbReference type="Pfam" id="PF06429">
    <property type="entry name" value="Flg_bbr_C"/>
    <property type="match status" value="1"/>
</dbReference>
<dbReference type="PROSITE" id="PS00588">
    <property type="entry name" value="FLAGELLA_BB_ROD"/>
    <property type="match status" value="1"/>
</dbReference>
<accession>O67243</accession>
<evidence type="ECO:0000250" key="1"/>
<evidence type="ECO:0000305" key="2"/>
<sequence length="134" mass="15438">MMDIFNALDISASGMYAQRIRMNTVASNLANYESFKSDGTPFNRLVPVFEAVENLEDPSEVYVNVREIREVPGFKLIYDPENPNADERGYVRLPNIEPVKEMVDMITAVRSYEANLKAFSLTKEIFERTFEAWK</sequence>
<keyword id="KW-0975">Bacterial flagellum</keyword>
<keyword id="KW-1185">Reference proteome</keyword>